<accession>Q9VIH7</accession>
<accession>D3DML7</accession>
<accession>Q8INU4</accession>
<accession>Q8MSY5</accession>
<accession>Q8MT51</accession>
<accession>Q8T0D2</accession>
<gene>
    <name evidence="6 12" type="primary">sky</name>
    <name evidence="12" type="ORF">CG9339</name>
</gene>
<keyword id="KW-0002">3D-structure</keyword>
<keyword id="KW-0025">Alternative splicing</keyword>
<keyword id="KW-0968">Cytoplasmic vesicle</keyword>
<keyword id="KW-0967">Endosome</keyword>
<keyword id="KW-0446">Lipid-binding</keyword>
<keyword id="KW-0472">Membrane</keyword>
<keyword id="KW-0597">Phosphoprotein</keyword>
<keyword id="KW-1185">Reference proteome</keyword>
<keyword id="KW-0770">Synapse</keyword>
<dbReference type="EMBL" id="AE014134">
    <property type="protein sequence ID" value="AAF53942.2"/>
    <property type="molecule type" value="Genomic_DNA"/>
</dbReference>
<dbReference type="EMBL" id="AE014134">
    <property type="protein sequence ID" value="AAF53945.2"/>
    <property type="molecule type" value="Genomic_DNA"/>
</dbReference>
<dbReference type="EMBL" id="AE014134">
    <property type="protein sequence ID" value="AAS64731.1"/>
    <property type="molecule type" value="Genomic_DNA"/>
</dbReference>
<dbReference type="EMBL" id="AE014134">
    <property type="protein sequence ID" value="AAN11097.2"/>
    <property type="molecule type" value="Genomic_DNA"/>
</dbReference>
<dbReference type="EMBL" id="AE014134">
    <property type="protein sequence ID" value="ACZ94312.1"/>
    <property type="molecule type" value="Genomic_DNA"/>
</dbReference>
<dbReference type="EMBL" id="AE014134">
    <property type="protein sequence ID" value="AGB93184.1"/>
    <property type="molecule type" value="Genomic_DNA"/>
</dbReference>
<dbReference type="EMBL" id="AY069398">
    <property type="protein sequence ID" value="AAL39543.1"/>
    <property type="molecule type" value="mRNA"/>
</dbReference>
<dbReference type="EMBL" id="AY118379">
    <property type="protein sequence ID" value="AAM48408.1"/>
    <property type="molecule type" value="mRNA"/>
</dbReference>
<dbReference type="EMBL" id="AY118490">
    <property type="protein sequence ID" value="AAM49859.1"/>
    <property type="status" value="ALT_INIT"/>
    <property type="molecule type" value="mRNA"/>
</dbReference>
<dbReference type="EMBL" id="BT120183">
    <property type="protein sequence ID" value="ADB91431.1"/>
    <property type="molecule type" value="mRNA"/>
</dbReference>
<dbReference type="RefSeq" id="NP_001163026.1">
    <molecule id="Q9VIH7-3"/>
    <property type="nucleotide sequence ID" value="NM_001169555.1"/>
</dbReference>
<dbReference type="RefSeq" id="NP_001260649.1">
    <molecule id="Q9VIH7-2"/>
    <property type="nucleotide sequence ID" value="NM_001273720.1"/>
</dbReference>
<dbReference type="RefSeq" id="NP_610073.1">
    <molecule id="Q9VIH7-1"/>
    <property type="nucleotide sequence ID" value="NM_136229.5"/>
</dbReference>
<dbReference type="RefSeq" id="NP_724302.1">
    <molecule id="Q9VIH7-1"/>
    <property type="nucleotide sequence ID" value="NM_165350.4"/>
</dbReference>
<dbReference type="RefSeq" id="NP_724303.2">
    <molecule id="Q9VIH7-3"/>
    <property type="nucleotide sequence ID" value="NM_165351.4"/>
</dbReference>
<dbReference type="RefSeq" id="NP_995738.1">
    <molecule id="Q9VIH7-1"/>
    <property type="nucleotide sequence ID" value="NM_206016.3"/>
</dbReference>
<dbReference type="PDB" id="5HJN">
    <property type="method" value="X-ray"/>
    <property type="resolution" value="2.50 A"/>
    <property type="chains" value="A=1-353"/>
</dbReference>
<dbReference type="PDB" id="5HJQ">
    <property type="method" value="X-ray"/>
    <property type="resolution" value="2.30 A"/>
    <property type="chains" value="A=1-353"/>
</dbReference>
<dbReference type="PDB" id="6R82">
    <property type="method" value="X-ray"/>
    <property type="resolution" value="2.05 A"/>
    <property type="chains" value="A/B=401-587"/>
</dbReference>
<dbReference type="PDBsum" id="5HJN"/>
<dbReference type="PDBsum" id="5HJQ"/>
<dbReference type="PDBsum" id="6R82"/>
<dbReference type="SMR" id="Q9VIH7"/>
<dbReference type="FunCoup" id="Q9VIH7">
    <property type="interactions" value="135"/>
</dbReference>
<dbReference type="IntAct" id="Q9VIH7">
    <property type="interactions" value="1"/>
</dbReference>
<dbReference type="STRING" id="7227.FBpp0303287"/>
<dbReference type="TCDB" id="8.A.126.1.2">
    <property type="family name" value="the nuclear receptor coactivator 7 (ncoa7) family"/>
</dbReference>
<dbReference type="PaxDb" id="7227-FBpp0303287"/>
<dbReference type="DNASU" id="35359"/>
<dbReference type="EnsemblMetazoa" id="FBtr0081441">
    <molecule id="Q9VIH7-1"/>
    <property type="protein sequence ID" value="FBpp0080970"/>
    <property type="gene ID" value="FBgn0032901"/>
</dbReference>
<dbReference type="EnsemblMetazoa" id="FBtr0081442">
    <molecule id="Q9VIH7-1"/>
    <property type="protein sequence ID" value="FBpp0080971"/>
    <property type="gene ID" value="FBgn0032901"/>
</dbReference>
<dbReference type="EnsemblMetazoa" id="FBtr0081445">
    <molecule id="Q9VIH7-3"/>
    <property type="protein sequence ID" value="FBpp0080974"/>
    <property type="gene ID" value="FBgn0032901"/>
</dbReference>
<dbReference type="EnsemblMetazoa" id="FBtr0081447">
    <molecule id="Q9VIH7-1"/>
    <property type="protein sequence ID" value="FBpp0080976"/>
    <property type="gene ID" value="FBgn0032901"/>
</dbReference>
<dbReference type="EnsemblMetazoa" id="FBtr0301961">
    <molecule id="Q9VIH7-3"/>
    <property type="protein sequence ID" value="FBpp0291173"/>
    <property type="gene ID" value="FBgn0032901"/>
</dbReference>
<dbReference type="EnsemblMetazoa" id="FBtr0330255">
    <molecule id="Q9VIH7-2"/>
    <property type="protein sequence ID" value="FBpp0303287"/>
    <property type="gene ID" value="FBgn0032901"/>
</dbReference>
<dbReference type="GeneID" id="35359"/>
<dbReference type="KEGG" id="dme:Dmel_CG9339"/>
<dbReference type="UCSC" id="CG9339-RA">
    <molecule id="Q9VIH7-1"/>
    <property type="organism name" value="d. melanogaster"/>
</dbReference>
<dbReference type="UCSC" id="CG9339-RE">
    <property type="organism name" value="d. melanogaster"/>
</dbReference>
<dbReference type="AGR" id="FB:FBgn0032901"/>
<dbReference type="CTD" id="35359"/>
<dbReference type="FlyBase" id="FBgn0032901">
    <property type="gene designation" value="sky"/>
</dbReference>
<dbReference type="VEuPathDB" id="VectorBase:FBgn0032901"/>
<dbReference type="eggNOG" id="KOG2801">
    <property type="taxonomic scope" value="Eukaryota"/>
</dbReference>
<dbReference type="GeneTree" id="ENSGT00410000025739"/>
<dbReference type="HOGENOM" id="CLU_018035_1_1_1"/>
<dbReference type="InParanoid" id="Q9VIH7"/>
<dbReference type="OMA" id="WGRTEHC"/>
<dbReference type="OrthoDB" id="10065050at2759"/>
<dbReference type="BioGRID-ORCS" id="35359">
    <property type="hits" value="0 hits in 1 CRISPR screen"/>
</dbReference>
<dbReference type="ChiTaRS" id="sky">
    <property type="organism name" value="fly"/>
</dbReference>
<dbReference type="GenomeRNAi" id="35359"/>
<dbReference type="PRO" id="PR:Q9VIH7"/>
<dbReference type="Proteomes" id="UP000000803">
    <property type="component" value="Chromosome 2L"/>
</dbReference>
<dbReference type="Bgee" id="FBgn0032901">
    <property type="expression patterns" value="Expressed in cardial cell (Drosophila) in dorsal vessel heart and 269 other cell types or tissues"/>
</dbReference>
<dbReference type="ExpressionAtlas" id="Q9VIH7">
    <property type="expression patterns" value="baseline"/>
</dbReference>
<dbReference type="GO" id="GO:0005737">
    <property type="term" value="C:cytoplasm"/>
    <property type="evidence" value="ECO:0000250"/>
    <property type="project" value="ParkinsonsUK-UCL"/>
</dbReference>
<dbReference type="GO" id="GO:0010008">
    <property type="term" value="C:endosome membrane"/>
    <property type="evidence" value="ECO:0007669"/>
    <property type="project" value="UniProtKB-SubCell"/>
</dbReference>
<dbReference type="GO" id="GO:0031594">
    <property type="term" value="C:neuromuscular junction"/>
    <property type="evidence" value="ECO:0000314"/>
    <property type="project" value="FlyBase"/>
</dbReference>
<dbReference type="GO" id="GO:0098794">
    <property type="term" value="C:postsynapse"/>
    <property type="evidence" value="ECO:0000315"/>
    <property type="project" value="UniProtKB"/>
</dbReference>
<dbReference type="GO" id="GO:0045202">
    <property type="term" value="C:synapse"/>
    <property type="evidence" value="ECO:0000314"/>
    <property type="project" value="SynGO"/>
</dbReference>
<dbReference type="GO" id="GO:0030672">
    <property type="term" value="C:synaptic vesicle membrane"/>
    <property type="evidence" value="ECO:0007669"/>
    <property type="project" value="UniProtKB-SubCell"/>
</dbReference>
<dbReference type="GO" id="GO:0043195">
    <property type="term" value="C:terminal bouton"/>
    <property type="evidence" value="ECO:0000314"/>
    <property type="project" value="FlyBase"/>
</dbReference>
<dbReference type="GO" id="GO:0005096">
    <property type="term" value="F:GTPase activator activity"/>
    <property type="evidence" value="ECO:0000315"/>
    <property type="project" value="UniProtKB"/>
</dbReference>
<dbReference type="GO" id="GO:0008289">
    <property type="term" value="F:lipid binding"/>
    <property type="evidence" value="ECO:0007669"/>
    <property type="project" value="UniProtKB-KW"/>
</dbReference>
<dbReference type="GO" id="GO:0007268">
    <property type="term" value="P:chemical synaptic transmission"/>
    <property type="evidence" value="ECO:0000315"/>
    <property type="project" value="FlyBase"/>
</dbReference>
<dbReference type="GO" id="GO:0046929">
    <property type="term" value="P:negative regulation of neurotransmitter secretion"/>
    <property type="evidence" value="ECO:0000315"/>
    <property type="project" value="UniProtKB"/>
</dbReference>
<dbReference type="GO" id="GO:1903422">
    <property type="term" value="P:negative regulation of synaptic vesicle recycling"/>
    <property type="evidence" value="ECO:0000315"/>
    <property type="project" value="UniProtKB"/>
</dbReference>
<dbReference type="GO" id="GO:0007274">
    <property type="term" value="P:neuromuscular synaptic transmission"/>
    <property type="evidence" value="ECO:0000315"/>
    <property type="project" value="FlyBase"/>
</dbReference>
<dbReference type="GO" id="GO:0031175">
    <property type="term" value="P:neuron projection development"/>
    <property type="evidence" value="ECO:0000250"/>
    <property type="project" value="ParkinsonsUK-UCL"/>
</dbReference>
<dbReference type="GO" id="GO:0099532">
    <property type="term" value="P:synaptic vesicle endosomal processing"/>
    <property type="evidence" value="ECO:0000314"/>
    <property type="project" value="SynGO"/>
</dbReference>
<dbReference type="GO" id="GO:0036466">
    <property type="term" value="P:synaptic vesicle recycling via endosome"/>
    <property type="evidence" value="ECO:0000315"/>
    <property type="project" value="UniProtKB"/>
</dbReference>
<dbReference type="GO" id="GO:0099003">
    <property type="term" value="P:vesicle-mediated transport in synapse"/>
    <property type="evidence" value="ECO:0000314"/>
    <property type="project" value="SynGO"/>
</dbReference>
<dbReference type="FunFam" id="1.10.472.80:FF:000035">
    <property type="entry name" value="Uncharacterized protein, isoform C"/>
    <property type="match status" value="1"/>
</dbReference>
<dbReference type="Gene3D" id="1.10.472.80">
    <property type="entry name" value="Ypt/Rab-GAP domain of gyp1p, domain 3"/>
    <property type="match status" value="1"/>
</dbReference>
<dbReference type="InterPro" id="IPR000195">
    <property type="entry name" value="Rab-GAP-TBC_dom"/>
</dbReference>
<dbReference type="InterPro" id="IPR035969">
    <property type="entry name" value="Rab-GAP_TBC_sf"/>
</dbReference>
<dbReference type="InterPro" id="IPR006571">
    <property type="entry name" value="TLDc_dom"/>
</dbReference>
<dbReference type="PANTHER" id="PTHR23354:SF122">
    <property type="entry name" value="GTPASE-ACTIVATING PROTEIN SKYWALKER"/>
    <property type="match status" value="1"/>
</dbReference>
<dbReference type="PANTHER" id="PTHR23354">
    <property type="entry name" value="NUCLEOLAR PROTEIN 7/ESTROGEN RECEPTOR COACTIVATOR-RELATED"/>
    <property type="match status" value="1"/>
</dbReference>
<dbReference type="Pfam" id="PF00566">
    <property type="entry name" value="RabGAP-TBC"/>
    <property type="match status" value="1"/>
</dbReference>
<dbReference type="Pfam" id="PF07534">
    <property type="entry name" value="TLD"/>
    <property type="match status" value="1"/>
</dbReference>
<dbReference type="SMART" id="SM00164">
    <property type="entry name" value="TBC"/>
    <property type="match status" value="1"/>
</dbReference>
<dbReference type="SMART" id="SM00584">
    <property type="entry name" value="TLDc"/>
    <property type="match status" value="1"/>
</dbReference>
<dbReference type="SUPFAM" id="SSF47923">
    <property type="entry name" value="Ypt/Rab-GAP domain of gyp1p"/>
    <property type="match status" value="1"/>
</dbReference>
<dbReference type="PROSITE" id="PS50086">
    <property type="entry name" value="TBC_RABGAP"/>
    <property type="match status" value="1"/>
</dbReference>
<dbReference type="PROSITE" id="PS51886">
    <property type="entry name" value="TLDC"/>
    <property type="match status" value="1"/>
</dbReference>
<reference evidence="13" key="1">
    <citation type="journal article" date="2000" name="Science">
        <title>The genome sequence of Drosophila melanogaster.</title>
        <authorList>
            <person name="Adams M.D."/>
            <person name="Celniker S.E."/>
            <person name="Holt R.A."/>
            <person name="Evans C.A."/>
            <person name="Gocayne J.D."/>
            <person name="Amanatides P.G."/>
            <person name="Scherer S.E."/>
            <person name="Li P.W."/>
            <person name="Hoskins R.A."/>
            <person name="Galle R.F."/>
            <person name="George R.A."/>
            <person name="Lewis S.E."/>
            <person name="Richards S."/>
            <person name="Ashburner M."/>
            <person name="Henderson S.N."/>
            <person name="Sutton G.G."/>
            <person name="Wortman J.R."/>
            <person name="Yandell M.D."/>
            <person name="Zhang Q."/>
            <person name="Chen L.X."/>
            <person name="Brandon R.C."/>
            <person name="Rogers Y.-H.C."/>
            <person name="Blazej R.G."/>
            <person name="Champe M."/>
            <person name="Pfeiffer B.D."/>
            <person name="Wan K.H."/>
            <person name="Doyle C."/>
            <person name="Baxter E.G."/>
            <person name="Helt G."/>
            <person name="Nelson C.R."/>
            <person name="Miklos G.L.G."/>
            <person name="Abril J.F."/>
            <person name="Agbayani A."/>
            <person name="An H.-J."/>
            <person name="Andrews-Pfannkoch C."/>
            <person name="Baldwin D."/>
            <person name="Ballew R.M."/>
            <person name="Basu A."/>
            <person name="Baxendale J."/>
            <person name="Bayraktaroglu L."/>
            <person name="Beasley E.M."/>
            <person name="Beeson K.Y."/>
            <person name="Benos P.V."/>
            <person name="Berman B.P."/>
            <person name="Bhandari D."/>
            <person name="Bolshakov S."/>
            <person name="Borkova D."/>
            <person name="Botchan M.R."/>
            <person name="Bouck J."/>
            <person name="Brokstein P."/>
            <person name="Brottier P."/>
            <person name="Burtis K.C."/>
            <person name="Busam D.A."/>
            <person name="Butler H."/>
            <person name="Cadieu E."/>
            <person name="Center A."/>
            <person name="Chandra I."/>
            <person name="Cherry J.M."/>
            <person name="Cawley S."/>
            <person name="Dahlke C."/>
            <person name="Davenport L.B."/>
            <person name="Davies P."/>
            <person name="de Pablos B."/>
            <person name="Delcher A."/>
            <person name="Deng Z."/>
            <person name="Mays A.D."/>
            <person name="Dew I."/>
            <person name="Dietz S.M."/>
            <person name="Dodson K."/>
            <person name="Doup L.E."/>
            <person name="Downes M."/>
            <person name="Dugan-Rocha S."/>
            <person name="Dunkov B.C."/>
            <person name="Dunn P."/>
            <person name="Durbin K.J."/>
            <person name="Evangelista C.C."/>
            <person name="Ferraz C."/>
            <person name="Ferriera S."/>
            <person name="Fleischmann W."/>
            <person name="Fosler C."/>
            <person name="Gabrielian A.E."/>
            <person name="Garg N.S."/>
            <person name="Gelbart W.M."/>
            <person name="Glasser K."/>
            <person name="Glodek A."/>
            <person name="Gong F."/>
            <person name="Gorrell J.H."/>
            <person name="Gu Z."/>
            <person name="Guan P."/>
            <person name="Harris M."/>
            <person name="Harris N.L."/>
            <person name="Harvey D.A."/>
            <person name="Heiman T.J."/>
            <person name="Hernandez J.R."/>
            <person name="Houck J."/>
            <person name="Hostin D."/>
            <person name="Houston K.A."/>
            <person name="Howland T.J."/>
            <person name="Wei M.-H."/>
            <person name="Ibegwam C."/>
            <person name="Jalali M."/>
            <person name="Kalush F."/>
            <person name="Karpen G.H."/>
            <person name="Ke Z."/>
            <person name="Kennison J.A."/>
            <person name="Ketchum K.A."/>
            <person name="Kimmel B.E."/>
            <person name="Kodira C.D."/>
            <person name="Kraft C.L."/>
            <person name="Kravitz S."/>
            <person name="Kulp D."/>
            <person name="Lai Z."/>
            <person name="Lasko P."/>
            <person name="Lei Y."/>
            <person name="Levitsky A.A."/>
            <person name="Li J.H."/>
            <person name="Li Z."/>
            <person name="Liang Y."/>
            <person name="Lin X."/>
            <person name="Liu X."/>
            <person name="Mattei B."/>
            <person name="McIntosh T.C."/>
            <person name="McLeod M.P."/>
            <person name="McPherson D."/>
            <person name="Merkulov G."/>
            <person name="Milshina N.V."/>
            <person name="Mobarry C."/>
            <person name="Morris J."/>
            <person name="Moshrefi A."/>
            <person name="Mount S.M."/>
            <person name="Moy M."/>
            <person name="Murphy B."/>
            <person name="Murphy L."/>
            <person name="Muzny D.M."/>
            <person name="Nelson D.L."/>
            <person name="Nelson D.R."/>
            <person name="Nelson K.A."/>
            <person name="Nixon K."/>
            <person name="Nusskern D.R."/>
            <person name="Pacleb J.M."/>
            <person name="Palazzolo M."/>
            <person name="Pittman G.S."/>
            <person name="Pan S."/>
            <person name="Pollard J."/>
            <person name="Puri V."/>
            <person name="Reese M.G."/>
            <person name="Reinert K."/>
            <person name="Remington K."/>
            <person name="Saunders R.D.C."/>
            <person name="Scheeler F."/>
            <person name="Shen H."/>
            <person name="Shue B.C."/>
            <person name="Siden-Kiamos I."/>
            <person name="Simpson M."/>
            <person name="Skupski M.P."/>
            <person name="Smith T.J."/>
            <person name="Spier E."/>
            <person name="Spradling A.C."/>
            <person name="Stapleton M."/>
            <person name="Strong R."/>
            <person name="Sun E."/>
            <person name="Svirskas R."/>
            <person name="Tector C."/>
            <person name="Turner R."/>
            <person name="Venter E."/>
            <person name="Wang A.H."/>
            <person name="Wang X."/>
            <person name="Wang Z.-Y."/>
            <person name="Wassarman D.A."/>
            <person name="Weinstock G.M."/>
            <person name="Weissenbach J."/>
            <person name="Williams S.M."/>
            <person name="Woodage T."/>
            <person name="Worley K.C."/>
            <person name="Wu D."/>
            <person name="Yang S."/>
            <person name="Yao Q.A."/>
            <person name="Ye J."/>
            <person name="Yeh R.-F."/>
            <person name="Zaveri J.S."/>
            <person name="Zhan M."/>
            <person name="Zhang G."/>
            <person name="Zhao Q."/>
            <person name="Zheng L."/>
            <person name="Zheng X.H."/>
            <person name="Zhong F.N."/>
            <person name="Zhong W."/>
            <person name="Zhou X."/>
            <person name="Zhu S.C."/>
            <person name="Zhu X."/>
            <person name="Smith H.O."/>
            <person name="Gibbs R.A."/>
            <person name="Myers E.W."/>
            <person name="Rubin G.M."/>
            <person name="Venter J.C."/>
        </authorList>
    </citation>
    <scope>NUCLEOTIDE SEQUENCE [LARGE SCALE GENOMIC DNA]</scope>
    <source>
        <strain evidence="13">Berkeley</strain>
    </source>
</reference>
<reference evidence="13" key="2">
    <citation type="journal article" date="2002" name="Genome Biol.">
        <title>Annotation of the Drosophila melanogaster euchromatic genome: a systematic review.</title>
        <authorList>
            <person name="Misra S."/>
            <person name="Crosby M.A."/>
            <person name="Mungall C.J."/>
            <person name="Matthews B.B."/>
            <person name="Campbell K.S."/>
            <person name="Hradecky P."/>
            <person name="Huang Y."/>
            <person name="Kaminker J.S."/>
            <person name="Millburn G.H."/>
            <person name="Prochnik S.E."/>
            <person name="Smith C.D."/>
            <person name="Tupy J.L."/>
            <person name="Whitfield E.J."/>
            <person name="Bayraktaroglu L."/>
            <person name="Berman B.P."/>
            <person name="Bettencourt B.R."/>
            <person name="Celniker S.E."/>
            <person name="de Grey A.D.N.J."/>
            <person name="Drysdale R.A."/>
            <person name="Harris N.L."/>
            <person name="Richter J."/>
            <person name="Russo S."/>
            <person name="Schroeder A.J."/>
            <person name="Shu S.Q."/>
            <person name="Stapleton M."/>
            <person name="Yamada C."/>
            <person name="Ashburner M."/>
            <person name="Gelbart W.M."/>
            <person name="Rubin G.M."/>
            <person name="Lewis S.E."/>
        </authorList>
    </citation>
    <scope>GENOME REANNOTATION</scope>
    <source>
        <strain evidence="13">Berkeley</strain>
    </source>
</reference>
<reference evidence="8 9 10" key="3">
    <citation type="journal article" date="2002" name="Genome Biol.">
        <title>A Drosophila full-length cDNA resource.</title>
        <authorList>
            <person name="Stapleton M."/>
            <person name="Carlson J.W."/>
            <person name="Brokstein P."/>
            <person name="Yu C."/>
            <person name="Champe M."/>
            <person name="George R.A."/>
            <person name="Guarin H."/>
            <person name="Kronmiller B."/>
            <person name="Pacleb J.M."/>
            <person name="Park S."/>
            <person name="Wan K.H."/>
            <person name="Rubin G.M."/>
            <person name="Celniker S.E."/>
        </authorList>
    </citation>
    <scope>NUCLEOTIDE SEQUENCE [LARGE SCALE MRNA] (ISOFORMS A AND F)</scope>
    <source>
        <strain>Berkeley</strain>
        <tissue>Embryo</tissue>
    </source>
</reference>
<reference evidence="11" key="4">
    <citation type="submission" date="2010-01" db="EMBL/GenBank/DDBJ databases">
        <authorList>
            <person name="Carlson J."/>
            <person name="Booth B."/>
            <person name="Frise E."/>
            <person name="Sandler J."/>
            <person name="Wan K."/>
            <person name="Yu C."/>
            <person name="Celniker S."/>
        </authorList>
    </citation>
    <scope>NUCLEOTIDE SEQUENCE [LARGE SCALE MRNA] (ISOFORM J)</scope>
</reference>
<reference evidence="7" key="5">
    <citation type="journal article" date="2011" name="Cell">
        <title>Loss of skywalker reveals synaptic endosomes as sorting stations for synaptic vesicle proteins.</title>
        <authorList>
            <person name="Uytterhoeven V."/>
            <person name="Kuenen S."/>
            <person name="Kasprowicz J."/>
            <person name="Miskiewicz K."/>
            <person name="Verstreken P."/>
        </authorList>
    </citation>
    <scope>FUNCTION</scope>
    <scope>SUBCELLULAR LOCATION</scope>
    <scope>MUTAGENESIS OF GLY-543</scope>
</reference>
<reference evidence="7" key="6">
    <citation type="journal article" date="2014" name="J. Cell Biol.">
        <title>Reduced synaptic vesicle protein degradation at lysosomes curbs TBC1D24/sky-induced neurodegeneration.</title>
        <authorList>
            <person name="Fernandes A.C."/>
            <person name="Uytterhoeven V."/>
            <person name="Kuenen S."/>
            <person name="Wang Y.C."/>
            <person name="Slabbaert J.R."/>
            <person name="Swerts J."/>
            <person name="Kasprowicz J."/>
            <person name="Aerts S."/>
            <person name="Verstreken P."/>
        </authorList>
    </citation>
    <scope>FUNCTION</scope>
</reference>
<reference evidence="14 15" key="7">
    <citation type="journal article" date="2016" name="Nat. Struct. Mol. Biol.">
        <title>Skywalker-TBC1D24 has a lipid-binding pocket mutated in epilepsy and required for synaptic function.</title>
        <authorList>
            <person name="Fischer B."/>
            <person name="Luthy K."/>
            <person name="Paesmans J."/>
            <person name="De Koninck C."/>
            <person name="Maes I."/>
            <person name="Swerts J."/>
            <person name="Kuenen S."/>
            <person name="Uytterhoeven V."/>
            <person name="Verstreken P."/>
            <person name="Versees W."/>
        </authorList>
    </citation>
    <scope>X-RAY CRYSTALLOGRAPHY (2.30 ANGSTROMS) OF 1-353 IN COMPLEX WITH 1D-MYO-INOSITOL 1,4,5-TRISPHOSPHATE AND SULFATE</scope>
    <scope>FUNCTION</scope>
    <scope>SUBCELLULAR LOCATION</scope>
    <scope>DOMAIN</scope>
    <scope>LIPID BINDING</scope>
    <scope>MUTAGENESIS OF ARG-79; ARG-281 AND ARG-335</scope>
</reference>
<sequence>MPYHRGGDASSQADKLSGIVEESDLYEGFAPHVETSEIKTLDFYNLPKQTGKEPALRSYTEIQQLLQQGKKRDVKNILRENSWPINSPIRAQLWPMLCGQHQTKQQMLDGFYWEMVHQVFGTTELSEKPIMLPAFVDATHCLPYHLTSTGRAVADRIVNVLGYDCPDITYSPVLYPITSILLHFMSEEEAYICLAGLVGSKEKVFINQTKLQHEVTWKTVMQIAKKHTKSATSYFQRICPGLKLERIFMDWCWWILAGLPFQHLVRIMDCYFHEGIKVLYRVALVILNLFHKECQSNNEWSPDNIKNDIGNALIKFCKKIPVSPAKLLHAAFSIRGLSTQYISRIFIKTEMLLKSRSVLTSGSKQLIKSRSSDNLPTSQSQVNIQMMSHTLTIREHFGLPGTKNFIKTWTDRQFLFTLWSWLPVRITMYQPVLLYTTEEHGCSLTTFYVRVEQHEPTLLMIKTCNNEVFGAYCSSRWFERNVKDDKGQRQAYFGTGETFLFSLYPERAKYPWVGIEGDKDLGHSSELFMAADSKMITIGGGEGQAIWMDENIRFGKTDSCKTFNNPPLCPSGDFEIRVLEVYGFVGI</sequence>
<feature type="chain" id="PRO_0000445623" description="GTPase-activating protein skywalker">
    <location>
        <begin position="1"/>
        <end position="587"/>
    </location>
</feature>
<feature type="domain" description="Rab-GAP TBC" evidence="1">
    <location>
        <begin position="84"/>
        <end position="275"/>
    </location>
</feature>
<feature type="domain" description="TLDc" evidence="2">
    <location>
        <begin position="408"/>
        <end position="585"/>
    </location>
</feature>
<feature type="binding site" evidence="5 15">
    <location>
        <position position="75"/>
    </location>
    <ligand>
        <name>a 1,2-diacyl-sn-glycero-3-phospho-(1D-myo-inositol)</name>
        <dbReference type="ChEBI" id="CHEBI:57880"/>
    </ligand>
</feature>
<feature type="binding site" evidence="5 15">
    <location>
        <position position="79"/>
    </location>
    <ligand>
        <name>a 1,2-diacyl-sn-glycero-3-phospho-(1D-myo-inositol)</name>
        <dbReference type="ChEBI" id="CHEBI:57880"/>
    </ligand>
</feature>
<feature type="binding site" evidence="5 15">
    <location>
        <position position="277"/>
    </location>
    <ligand>
        <name>a 1,2-diacyl-sn-glycero-3-phospho-(1D-myo-inositol)</name>
        <dbReference type="ChEBI" id="CHEBI:57880"/>
    </ligand>
</feature>
<feature type="binding site" evidence="5 15">
    <location>
        <position position="281"/>
    </location>
    <ligand>
        <name>a 1,2-diacyl-sn-glycero-3-phospho-(1D-myo-inositol)</name>
        <dbReference type="ChEBI" id="CHEBI:57880"/>
    </ligand>
</feature>
<feature type="binding site" evidence="5 15">
    <location>
        <begin position="335"/>
        <end position="339"/>
    </location>
    <ligand>
        <name>a 1,2-diacyl-sn-glycero-3-phospho-(1D-myo-inositol)</name>
        <dbReference type="ChEBI" id="CHEBI:57880"/>
    </ligand>
</feature>
<feature type="splice variant" id="VSP_059917" description="In isoform F.">
    <original>MPYHRGGDASSQADKLSGIVEESDLYEGFAPHVETSEIKTLDFYNLPKQT</original>
    <variation>MVGKVLGIKDLEQFSSRRSSVYVDPECDKFFELPLFIAASSNDITTKCQCFQFSP</variation>
    <location>
        <begin position="1"/>
        <end position="50"/>
    </location>
</feature>
<feature type="splice variant" id="VSP_059918" description="In isoform F.">
    <location>
        <begin position="396"/>
        <end position="414"/>
    </location>
</feature>
<feature type="splice variant" id="VSP_059919" description="In isoform J.">
    <original>HFGLPGTKNFIKTWTDRQF</original>
    <variation>KLHSESCRNLGEKSPGHRAIAMGVYPIHNLKSQACKNED</variation>
    <location>
        <begin position="396"/>
        <end position="414"/>
    </location>
</feature>
<feature type="mutagenesis site" description="Loss of binding to liposomes containing phosphoinositides. In contrast to wild-type protein whose expression largely rescues mutant phenotypes, expression in mutant neurons only partially rescues the increase in synapse mobility and the abherent accumulation of large cisternal or endosomal-like structures in pre-synaptic terminals observed in mutants. In addition, the number of mutants displaying defective motor coordination, defective flight, hyperactivity, increased temperature sensitivity and seziures is increased compared to mutants expressing wild-type protein." evidence="5">
    <original>R</original>
    <variation>C</variation>
    <location>
        <position position="79"/>
    </location>
</feature>
<feature type="mutagenesis site" description="Reduced binding to liposomes under low phosphatidylinositol 4,5-bisphosphate (PIP2) concentrations. Reduced binding to inositol 1,4,5-trisphosphate (IP3). In contrast to wild-type, expression only partially rescues the accumulation of sub-boutonic foci." evidence="5">
    <original>R</original>
    <variation>C</variation>
    <location>
        <position position="281"/>
    </location>
</feature>
<feature type="mutagenesis site" description="Little effect on binding to liposomes, phosphatidylinositol 4,5-bisphosphate and inositol 1,4,5-trisphosphate." evidence="5">
    <original>R</original>
    <variation>P</variation>
    <location>
        <position position="335"/>
    </location>
</feature>
<feature type="mutagenesis site" description="In sky-1; embryonic lethal." evidence="3">
    <original>G</original>
    <variation>R</variation>
    <location>
        <position position="543"/>
    </location>
</feature>
<feature type="helix" evidence="17">
    <location>
        <begin position="59"/>
        <end position="68"/>
    </location>
</feature>
<feature type="helix" evidence="17">
    <location>
        <begin position="71"/>
        <end position="80"/>
    </location>
</feature>
<feature type="helix" evidence="17">
    <location>
        <begin position="90"/>
        <end position="99"/>
    </location>
</feature>
<feature type="strand" evidence="16">
    <location>
        <begin position="101"/>
        <end position="104"/>
    </location>
</feature>
<feature type="strand" evidence="16">
    <location>
        <begin position="108"/>
        <end position="110"/>
    </location>
</feature>
<feature type="helix" evidence="17">
    <location>
        <begin position="111"/>
        <end position="120"/>
    </location>
</feature>
<feature type="strand" evidence="17">
    <location>
        <begin position="121"/>
        <end position="124"/>
    </location>
</feature>
<feature type="helix" evidence="17">
    <location>
        <begin position="138"/>
        <end position="140"/>
    </location>
</feature>
<feature type="helix" evidence="17">
    <location>
        <begin position="148"/>
        <end position="164"/>
    </location>
</feature>
<feature type="helix" evidence="17">
    <location>
        <begin position="174"/>
        <end position="181"/>
    </location>
</feature>
<feature type="turn" evidence="17">
    <location>
        <begin position="182"/>
        <end position="184"/>
    </location>
</feature>
<feature type="helix" evidence="17">
    <location>
        <begin position="187"/>
        <end position="198"/>
    </location>
</feature>
<feature type="strand" evidence="17">
    <location>
        <begin position="201"/>
        <end position="203"/>
    </location>
</feature>
<feature type="helix" evidence="17">
    <location>
        <begin position="210"/>
        <end position="227"/>
    </location>
</feature>
<feature type="helix" evidence="17">
    <location>
        <begin position="229"/>
        <end position="238"/>
    </location>
</feature>
<feature type="helix" evidence="17">
    <location>
        <begin position="245"/>
        <end position="248"/>
    </location>
</feature>
<feature type="helix" evidence="17">
    <location>
        <begin position="251"/>
        <end position="256"/>
    </location>
</feature>
<feature type="helix" evidence="17">
    <location>
        <begin position="261"/>
        <end position="274"/>
    </location>
</feature>
<feature type="helix" evidence="17">
    <location>
        <begin position="277"/>
        <end position="294"/>
    </location>
</feature>
<feature type="helix" evidence="16">
    <location>
        <begin position="298"/>
        <end position="300"/>
    </location>
</feature>
<feature type="helix" evidence="17">
    <location>
        <begin position="302"/>
        <end position="305"/>
    </location>
</feature>
<feature type="helix" evidence="17">
    <location>
        <begin position="309"/>
        <end position="318"/>
    </location>
</feature>
<feature type="helix" evidence="17">
    <location>
        <begin position="324"/>
        <end position="333"/>
    </location>
</feature>
<feature type="turn" evidence="17">
    <location>
        <begin position="339"/>
        <end position="343"/>
    </location>
</feature>
<feature type="helix" evidence="18">
    <location>
        <begin position="405"/>
        <end position="411"/>
    </location>
</feature>
<feature type="helix" evidence="18">
    <location>
        <begin position="413"/>
        <end position="418"/>
    </location>
</feature>
<feature type="helix" evidence="18">
    <location>
        <begin position="419"/>
        <end position="421"/>
    </location>
</feature>
<feature type="helix" evidence="18">
    <location>
        <begin position="424"/>
        <end position="428"/>
    </location>
</feature>
<feature type="strand" evidence="18">
    <location>
        <begin position="429"/>
        <end position="436"/>
    </location>
</feature>
<feature type="turn" evidence="18">
    <location>
        <begin position="437"/>
        <end position="439"/>
    </location>
</feature>
<feature type="helix" evidence="18">
    <location>
        <begin position="444"/>
        <end position="451"/>
    </location>
</feature>
<feature type="strand" evidence="18">
    <location>
        <begin position="456"/>
        <end position="463"/>
    </location>
</feature>
<feature type="strand" evidence="18">
    <location>
        <begin position="468"/>
        <end position="473"/>
    </location>
</feature>
<feature type="helix" evidence="18">
    <location>
        <begin position="477"/>
        <end position="481"/>
    </location>
</feature>
<feature type="strand" evidence="18">
    <location>
        <begin position="499"/>
        <end position="506"/>
    </location>
</feature>
<feature type="strand" evidence="18">
    <location>
        <begin position="508"/>
        <end position="510"/>
    </location>
</feature>
<feature type="helix" evidence="18">
    <location>
        <begin position="523"/>
        <end position="525"/>
    </location>
</feature>
<feature type="strand" evidence="18">
    <location>
        <begin position="529"/>
        <end position="531"/>
    </location>
</feature>
<feature type="strand" evidence="18">
    <location>
        <begin position="533"/>
        <end position="538"/>
    </location>
</feature>
<feature type="strand" evidence="18">
    <location>
        <begin position="541"/>
        <end position="543"/>
    </location>
</feature>
<feature type="strand" evidence="18">
    <location>
        <begin position="545"/>
        <end position="549"/>
    </location>
</feature>
<feature type="strand" evidence="18">
    <location>
        <begin position="552"/>
        <end position="556"/>
    </location>
</feature>
<feature type="turn" evidence="18">
    <location>
        <begin position="561"/>
        <end position="564"/>
    </location>
</feature>
<feature type="strand" evidence="18">
    <location>
        <begin position="568"/>
        <end position="585"/>
    </location>
</feature>
<proteinExistence type="evidence at protein level"/>
<name>SKY_DROME</name>
<comment type="function">
    <text evidence="3 4 5">GTPase-activating protein (GAP) for Rab35 which regulates synaptic vesicle (SV) protein recycling and turnover at the neuromuscular junction boutons and possibly ventral nerve cord via endosomal trafficking (PubMed:21458671, PubMed:25422373, PubMed:27669036). Inhibits Rab35-mediated endosomal sorting which traffics old or dysfunctional SV proteins through a degradative endolysosomal route that involves the ESCRT pathway and the HOPS complex members dor, vps39 and rab7 (PubMed:21458671, PubMed:25422373). This function is essential for preventing excessive degradation and turnover of vesicles from the readily releasable pool which leads to increased neurotransmission and eventually neurodegeneration (PubMed:21458671, PubMed:25422373, PubMed:27669036). Preferentially binds phosphoinositides phosphorylated at the D5 position of the inositol ring, such as phosphatidylinositol 4,5-bisphosphate (PIP2) and phosphatidylinositol 3,4,5-trisphosphate (PIP3) (PubMed:27669036). Binding to phosphoinositides and thus membrane-association, is required for its function in regulating the turnover of synaptic-vesicle proteins (PubMed:27669036). It is therefore likely that it is recruited to vesicle membranes with high phosphoinositide content and thereby selectively prevents endolysosomal degradation of these vesicles (PubMed:27669036).</text>
</comment>
<comment type="subcellular location">
    <subcellularLocation>
        <location evidence="3 5">Cytoplasmic vesicle</location>
        <location evidence="3 5">Secretory vesicle</location>
        <location evidence="3 5">Synaptic vesicle membrane</location>
        <topology evidence="3 5">Peripheral membrane protein</topology>
    </subcellularLocation>
    <subcellularLocation>
        <location evidence="3">Endosome membrane</location>
        <topology evidence="3">Peripheral membrane protein</topology>
    </subcellularLocation>
    <text evidence="3 5">Detected at the synapses of neuromuscular junction boutons, where it displays co-localization with Rab35 (PubMed:21458671). Associates with certain types of membrane phosphoinositides such as phosphatidylinositol 4,5-bisphosphate (PIP2) and phosphatidylinositol 3,4,5-trisphosphate (PIP3) (PubMed:27669036).</text>
</comment>
<comment type="alternative products">
    <event type="alternative splicing"/>
    <isoform>
        <id>Q9VIH7-1</id>
        <name evidence="12">A</name>
        <sequence type="displayed"/>
    </isoform>
    <isoform>
        <id>Q9VIH7-2</id>
        <name evidence="12">J</name>
        <sequence type="described" ref="VSP_059919"/>
    </isoform>
    <isoform>
        <id>Q9VIH7-3</id>
        <name evidence="12">F</name>
        <name evidence="12">I</name>
        <sequence type="described" ref="VSP_059917 VSP_059918"/>
    </isoform>
</comment>
<comment type="tissue specificity">
    <text evidence="3">Detected in the larval ventral nerve cord and neuromuscular junction boutons (at protein level).</text>
</comment>
<comment type="domain">
    <text evidence="5">The Rab-GAP TBC domain is essential for phosphoinositide binding.</text>
</comment>
<comment type="sequence caution" evidence="7">
    <conflict type="erroneous initiation">
        <sequence resource="EMBL-CDS" id="AAM49859"/>
    </conflict>
    <text>Extended N-terminus.</text>
</comment>
<protein>
    <recommendedName>
        <fullName evidence="6">GTPase-activating protein skywalker</fullName>
    </recommendedName>
</protein>
<organism evidence="13">
    <name type="scientific">Drosophila melanogaster</name>
    <name type="common">Fruit fly</name>
    <dbReference type="NCBI Taxonomy" id="7227"/>
    <lineage>
        <taxon>Eukaryota</taxon>
        <taxon>Metazoa</taxon>
        <taxon>Ecdysozoa</taxon>
        <taxon>Arthropoda</taxon>
        <taxon>Hexapoda</taxon>
        <taxon>Insecta</taxon>
        <taxon>Pterygota</taxon>
        <taxon>Neoptera</taxon>
        <taxon>Endopterygota</taxon>
        <taxon>Diptera</taxon>
        <taxon>Brachycera</taxon>
        <taxon>Muscomorpha</taxon>
        <taxon>Ephydroidea</taxon>
        <taxon>Drosophilidae</taxon>
        <taxon>Drosophila</taxon>
        <taxon>Sophophora</taxon>
    </lineage>
</organism>
<evidence type="ECO:0000255" key="1">
    <source>
        <dbReference type="PROSITE-ProRule" id="PRU00163"/>
    </source>
</evidence>
<evidence type="ECO:0000255" key="2">
    <source>
        <dbReference type="PROSITE-ProRule" id="PRU01234"/>
    </source>
</evidence>
<evidence type="ECO:0000269" key="3">
    <source>
    </source>
</evidence>
<evidence type="ECO:0000269" key="4">
    <source>
    </source>
</evidence>
<evidence type="ECO:0000269" key="5">
    <source>
    </source>
</evidence>
<evidence type="ECO:0000303" key="6">
    <source>
    </source>
</evidence>
<evidence type="ECO:0000305" key="7"/>
<evidence type="ECO:0000312" key="8">
    <source>
        <dbReference type="EMBL" id="AAL39543.1"/>
    </source>
</evidence>
<evidence type="ECO:0000312" key="9">
    <source>
        <dbReference type="EMBL" id="AAM48408.1"/>
    </source>
</evidence>
<evidence type="ECO:0000312" key="10">
    <source>
        <dbReference type="EMBL" id="AAM49859.1"/>
    </source>
</evidence>
<evidence type="ECO:0000312" key="11">
    <source>
        <dbReference type="EMBL" id="ADB91431.1"/>
    </source>
</evidence>
<evidence type="ECO:0000312" key="12">
    <source>
        <dbReference type="FlyBase" id="FBgn0032901"/>
    </source>
</evidence>
<evidence type="ECO:0000312" key="13">
    <source>
        <dbReference type="Proteomes" id="UP000000803"/>
    </source>
</evidence>
<evidence type="ECO:0007744" key="14">
    <source>
        <dbReference type="PDB" id="5HJN"/>
    </source>
</evidence>
<evidence type="ECO:0007744" key="15">
    <source>
        <dbReference type="PDB" id="5HJQ"/>
    </source>
</evidence>
<evidence type="ECO:0007829" key="16">
    <source>
        <dbReference type="PDB" id="5HJN"/>
    </source>
</evidence>
<evidence type="ECO:0007829" key="17">
    <source>
        <dbReference type="PDB" id="5HJQ"/>
    </source>
</evidence>
<evidence type="ECO:0007829" key="18">
    <source>
        <dbReference type="PDB" id="6R82"/>
    </source>
</evidence>